<sequence length="342" mass="38675">MTTMLTTPLSGWSQLSLSYLTLTVGALALVVVLYISIDRFPAPRWLSKKYQLIGQKDPASTTSLECPYSYIRQIYGHHHWAPFVHKLSPTLQHDDPAKYKMVLEIMDAIHLCLMLVDDISDGSDFRKGRPAAHRIYGPSETANRAYFRVTQILNQTTTGFPHLAPWLMQDLENILEGQDLSLVWRRDGLKNFPTAPSERAAAYQRMASLKTGSLFRLLGHLVLEDRSMDDTMTLVAWYSQLQNDCKNVYSTEYAKMKGAIAEDLCNGELSYPIVLAMNAPDGHWVELALQSPSPRNVRNALRAIRSDNVHQMCMAELAESSSSIQDWLALWGRKEKLDLKST</sequence>
<feature type="chain" id="PRO_0000446549" description="Prenyl transferase penC">
    <location>
        <begin position="1"/>
        <end position="342"/>
    </location>
</feature>
<feature type="transmembrane region" description="Helical" evidence="2">
    <location>
        <begin position="17"/>
        <end position="37"/>
    </location>
</feature>
<feature type="binding site" evidence="1">
    <location>
        <position position="110"/>
    </location>
    <ligand>
        <name>isopentenyl diphosphate</name>
        <dbReference type="ChEBI" id="CHEBI:128769"/>
    </ligand>
</feature>
<feature type="binding site" evidence="1">
    <location>
        <position position="117"/>
    </location>
    <ligand>
        <name>Mg(2+)</name>
        <dbReference type="ChEBI" id="CHEBI:18420"/>
        <label>1</label>
    </ligand>
</feature>
<feature type="binding site" evidence="1">
    <location>
        <position position="117"/>
    </location>
    <ligand>
        <name>Mg(2+)</name>
        <dbReference type="ChEBI" id="CHEBI:18420"/>
        <label>2</label>
    </ligand>
</feature>
<feature type="binding site" evidence="1">
    <location>
        <position position="121"/>
    </location>
    <ligand>
        <name>Mg(2+)</name>
        <dbReference type="ChEBI" id="CHEBI:18420"/>
        <label>1</label>
    </ligand>
</feature>
<feature type="binding site" evidence="1">
    <location>
        <position position="121"/>
    </location>
    <ligand>
        <name>Mg(2+)</name>
        <dbReference type="ChEBI" id="CHEBI:18420"/>
        <label>2</label>
    </ligand>
</feature>
<feature type="binding site" evidence="1">
    <location>
        <position position="126"/>
    </location>
    <ligand>
        <name>dimethylallyl diphosphate</name>
        <dbReference type="ChEBI" id="CHEBI:57623"/>
    </ligand>
</feature>
<feature type="binding site" evidence="1">
    <location>
        <position position="210"/>
    </location>
    <ligand>
        <name>dimethylallyl diphosphate</name>
        <dbReference type="ChEBI" id="CHEBI:57623"/>
    </ligand>
</feature>
<feature type="glycosylation site" description="N-linked (GlcNAc...) asparagine" evidence="3">
    <location>
        <position position="154"/>
    </location>
</feature>
<proteinExistence type="inferred from homology"/>
<keyword id="KW-0325">Glycoprotein</keyword>
<keyword id="KW-0460">Magnesium</keyword>
<keyword id="KW-0472">Membrane</keyword>
<keyword id="KW-0479">Metal-binding</keyword>
<keyword id="KW-0808">Transferase</keyword>
<keyword id="KW-0812">Transmembrane</keyword>
<keyword id="KW-1133">Transmembrane helix</keyword>
<organism>
    <name type="scientific">Penicillium crustosum</name>
    <name type="common">Blue mold fungus</name>
    <dbReference type="NCBI Taxonomy" id="36656"/>
    <lineage>
        <taxon>Eukaryota</taxon>
        <taxon>Fungi</taxon>
        <taxon>Dikarya</taxon>
        <taxon>Ascomycota</taxon>
        <taxon>Pezizomycotina</taxon>
        <taxon>Eurotiomycetes</taxon>
        <taxon>Eurotiomycetidae</taxon>
        <taxon>Eurotiales</taxon>
        <taxon>Aspergillaceae</taxon>
        <taxon>Penicillium</taxon>
    </lineage>
</organism>
<protein>
    <recommendedName>
        <fullName evidence="5">Prenyl transferase penC</fullName>
        <ecNumber evidence="7">2.5.1.-</ecNumber>
    </recommendedName>
    <alternativeName>
        <fullName evidence="5">Penitrem biosynthesis cluster protein C</fullName>
    </alternativeName>
</protein>
<dbReference type="EC" id="2.5.1.-" evidence="7"/>
<dbReference type="EMBL" id="KC963408">
    <property type="protein sequence ID" value="AGZ20189.1"/>
    <property type="molecule type" value="Genomic_DNA"/>
</dbReference>
<dbReference type="SMR" id="A0A0E3D8N1"/>
<dbReference type="GlyCosmos" id="A0A0E3D8N1">
    <property type="glycosylation" value="1 site, No reported glycans"/>
</dbReference>
<dbReference type="GO" id="GO:0016020">
    <property type="term" value="C:membrane"/>
    <property type="evidence" value="ECO:0007669"/>
    <property type="project" value="UniProtKB-SubCell"/>
</dbReference>
<dbReference type="GO" id="GO:0046872">
    <property type="term" value="F:metal ion binding"/>
    <property type="evidence" value="ECO:0007669"/>
    <property type="project" value="UniProtKB-KW"/>
</dbReference>
<dbReference type="GO" id="GO:0004659">
    <property type="term" value="F:prenyltransferase activity"/>
    <property type="evidence" value="ECO:0007669"/>
    <property type="project" value="InterPro"/>
</dbReference>
<dbReference type="GO" id="GO:0046165">
    <property type="term" value="P:alcohol biosynthetic process"/>
    <property type="evidence" value="ECO:0007669"/>
    <property type="project" value="UniProtKB-ARBA"/>
</dbReference>
<dbReference type="GO" id="GO:0008299">
    <property type="term" value="P:isoprenoid biosynthetic process"/>
    <property type="evidence" value="ECO:0007669"/>
    <property type="project" value="InterPro"/>
</dbReference>
<dbReference type="GO" id="GO:0043386">
    <property type="term" value="P:mycotoxin biosynthetic process"/>
    <property type="evidence" value="ECO:0007669"/>
    <property type="project" value="UniProtKB-ARBA"/>
</dbReference>
<dbReference type="CDD" id="cd00867">
    <property type="entry name" value="Trans_IPPS"/>
    <property type="match status" value="1"/>
</dbReference>
<dbReference type="Gene3D" id="1.10.600.10">
    <property type="entry name" value="Farnesyl Diphosphate Synthase"/>
    <property type="match status" value="1"/>
</dbReference>
<dbReference type="InterPro" id="IPR008949">
    <property type="entry name" value="Isoprenoid_synthase_dom_sf"/>
</dbReference>
<dbReference type="InterPro" id="IPR000092">
    <property type="entry name" value="Polyprenyl_synt"/>
</dbReference>
<dbReference type="PANTHER" id="PTHR12001">
    <property type="entry name" value="GERANYLGERANYL PYROPHOSPHATE SYNTHASE"/>
    <property type="match status" value="1"/>
</dbReference>
<dbReference type="PANTHER" id="PTHR12001:SF72">
    <property type="entry name" value="THIJ_PFPI FAMILY PROTEIN (AFU_ORTHOLOGUE AFUA_3G01210)-RELATED"/>
    <property type="match status" value="1"/>
</dbReference>
<dbReference type="Pfam" id="PF00348">
    <property type="entry name" value="polyprenyl_synt"/>
    <property type="match status" value="1"/>
</dbReference>
<dbReference type="SUPFAM" id="SSF48576">
    <property type="entry name" value="Terpenoid synthases"/>
    <property type="match status" value="1"/>
</dbReference>
<reference key="1">
    <citation type="journal article" date="2015" name="Toxins">
        <title>Molecular cloning and functional analysis of gene clusters for the biosynthesis of indole-diterpenes in Penicillium crustosum and P. janthinellum.</title>
        <authorList>
            <person name="Nicholson M.J."/>
            <person name="Eaton C.J."/>
            <person name="Starkel C."/>
            <person name="Tapper B.A."/>
            <person name="Cox M.P."/>
            <person name="Scott B."/>
        </authorList>
    </citation>
    <scope>NUCLEOTIDE SEQUENCE [GENOMIC DNA]</scope>
    <scope>IDENTIFICATION</scope>
    <scope>FUNCTION</scope>
    <scope>PATHWAY</scope>
    <source>
        <strain>PN2402</strain>
    </source>
</reference>
<accession>A0A0E3D8N1</accession>
<comment type="function">
    <text evidence="4 7">Prenyl transferase; part of the gene cluster that mediates the biosynthesis of the indole diterpenes penitrems (PubMed:26213965). The geranylgeranyl diphosphate (GGPP) synthase penG catalyzes the first step in penitrem biosynthesis via conversion of farnesyl pyrophosphate and isopentyl pyrophosphate into geranylgeranyl pyrophosphate (GGPP) (Probable). Condensation of indole-3-glycerol phosphate with GGPP by the prenyl transferase penC then forms 3-geranylgeranylindole (3-GGI) (Probable). Epoxidation by the FAD-dependent monooxygenase penM leads to a epoxidized-GGI that is substrate of the terpene cyclase penB for cyclization to yield paspaline (Probable). Paspaline is subsequently converted to 13-desoxypaxilline by the cytochrome P450 monooxygenase penP, the latter being then converted to paxilline by the cytochrome P450 monooxygenase penQ (PubMed:26213965). Paxilline is converted to beta-paxitriol via C-10 ketoreduction by the short-chain dehydrogenase PC-15 which can be monoprenylated at the C-20 by the indole diterpene prenyltransferase penD (Probable). A two-step elimination (acetylation and elimination) process performed by the O-acetyltransferase PC-16 and the P.simplicissimum ptmI-ortholog not yet identified in P.crustosum, leads to the production of the prenylated form of penijanthine (Probable). The FAD-linked oxidoreductase ptmO then converts the prenylated form of penijanthine into PC-M5 which is in turn transformed into PC-M4 by the aromatic dimethylallyltransferase PC-22 (Probable). A series of oxidation steps involving 4 cytochrome P450 monooxygenases (PC-21, PC-05, PC-23, PC-20) and a FAD-dependent monooxygenase (PC-14) are required for the transformation of PC-M4 to penitrems A and E. Synthesis of these final products is proposed to proceed via penitrems D and C (PC-21, PC-05, PC-14) and penitrems B and F (PC-21, PC-05, PC-14, PC-23) (Probable).</text>
</comment>
<comment type="pathway">
    <text evidence="7">Secondary metabolite biosynthesis.</text>
</comment>
<comment type="subcellular location">
    <subcellularLocation>
        <location evidence="2">Membrane</location>
        <topology evidence="2">Single-pass membrane protein</topology>
    </subcellularLocation>
</comment>
<comment type="similarity">
    <text evidence="6">Belongs to the FPP/GGPP synthase family.</text>
</comment>
<gene>
    <name evidence="5" type="primary">penC</name>
</gene>
<name>PENC_PENCR</name>
<evidence type="ECO:0000250" key="1">
    <source>
        <dbReference type="UniProtKB" id="Q12051"/>
    </source>
</evidence>
<evidence type="ECO:0000255" key="2"/>
<evidence type="ECO:0000255" key="3">
    <source>
        <dbReference type="PROSITE-ProRule" id="PRU00498"/>
    </source>
</evidence>
<evidence type="ECO:0000269" key="4">
    <source>
    </source>
</evidence>
<evidence type="ECO:0000303" key="5">
    <source>
    </source>
</evidence>
<evidence type="ECO:0000305" key="6"/>
<evidence type="ECO:0000305" key="7">
    <source>
    </source>
</evidence>